<proteinExistence type="inferred from homology"/>
<organism>
    <name type="scientific">Pyrobaculum neutrophilum (strain DSM 2338 / JCM 9278 / NBRC 100436 / V24Sta)</name>
    <name type="common">Thermoproteus neutrophilus</name>
    <dbReference type="NCBI Taxonomy" id="444157"/>
    <lineage>
        <taxon>Archaea</taxon>
        <taxon>Thermoproteota</taxon>
        <taxon>Thermoprotei</taxon>
        <taxon>Thermoproteales</taxon>
        <taxon>Thermoproteaceae</taxon>
        <taxon>Pyrobaculum</taxon>
    </lineage>
</organism>
<evidence type="ECO:0000250" key="1"/>
<evidence type="ECO:0000305" key="2"/>
<gene>
    <name type="primary">dapAL</name>
    <name type="ordered locus">Tneu_1812</name>
</gene>
<name>DAPAL_PYRNV</name>
<protein>
    <recommendedName>
        <fullName>Uncharacterized DapA-like lyase Tneu_1812</fullName>
        <ecNumber>4.-.-.-</ecNumber>
    </recommendedName>
</protein>
<dbReference type="EC" id="4.-.-.-"/>
<dbReference type="EMBL" id="CP001014">
    <property type="protein sequence ID" value="ACB40729.1"/>
    <property type="molecule type" value="Genomic_DNA"/>
</dbReference>
<dbReference type="RefSeq" id="WP_012351148.1">
    <property type="nucleotide sequence ID" value="NC_010525.1"/>
</dbReference>
<dbReference type="SMR" id="B1YB29"/>
<dbReference type="STRING" id="444157.Tneu_1812"/>
<dbReference type="GeneID" id="6164478"/>
<dbReference type="KEGG" id="tne:Tneu_1812"/>
<dbReference type="eggNOG" id="arCOG04172">
    <property type="taxonomic scope" value="Archaea"/>
</dbReference>
<dbReference type="HOGENOM" id="CLU_049343_5_1_2"/>
<dbReference type="OrthoDB" id="33636at2157"/>
<dbReference type="Proteomes" id="UP000001694">
    <property type="component" value="Chromosome"/>
</dbReference>
<dbReference type="GO" id="GO:0005737">
    <property type="term" value="C:cytoplasm"/>
    <property type="evidence" value="ECO:0007669"/>
    <property type="project" value="UniProtKB-SubCell"/>
</dbReference>
<dbReference type="GO" id="GO:0008675">
    <property type="term" value="F:2-dehydro-3-deoxy-phosphogluconate aldolase activity"/>
    <property type="evidence" value="ECO:0007669"/>
    <property type="project" value="UniProtKB-ARBA"/>
</dbReference>
<dbReference type="GO" id="GO:0008840">
    <property type="term" value="F:4-hydroxy-tetrahydrodipicolinate synthase activity"/>
    <property type="evidence" value="ECO:0007669"/>
    <property type="project" value="TreeGrafter"/>
</dbReference>
<dbReference type="CDD" id="cd00408">
    <property type="entry name" value="DHDPS-like"/>
    <property type="match status" value="1"/>
</dbReference>
<dbReference type="Gene3D" id="3.20.20.70">
    <property type="entry name" value="Aldolase class I"/>
    <property type="match status" value="1"/>
</dbReference>
<dbReference type="InterPro" id="IPR013785">
    <property type="entry name" value="Aldolase_TIM"/>
</dbReference>
<dbReference type="InterPro" id="IPR002220">
    <property type="entry name" value="DapA-like"/>
</dbReference>
<dbReference type="PANTHER" id="PTHR12128:SF66">
    <property type="entry name" value="4-HYDROXY-2-OXOGLUTARATE ALDOLASE, MITOCHONDRIAL"/>
    <property type="match status" value="1"/>
</dbReference>
<dbReference type="PANTHER" id="PTHR12128">
    <property type="entry name" value="DIHYDRODIPICOLINATE SYNTHASE"/>
    <property type="match status" value="1"/>
</dbReference>
<dbReference type="Pfam" id="PF00701">
    <property type="entry name" value="DHDPS"/>
    <property type="match status" value="1"/>
</dbReference>
<dbReference type="PIRSF" id="PIRSF001365">
    <property type="entry name" value="DHDPS"/>
    <property type="match status" value="1"/>
</dbReference>
<dbReference type="PRINTS" id="PR00146">
    <property type="entry name" value="DHPICSNTHASE"/>
</dbReference>
<dbReference type="SMART" id="SM01130">
    <property type="entry name" value="DHDPS"/>
    <property type="match status" value="1"/>
</dbReference>
<dbReference type="SUPFAM" id="SSF51569">
    <property type="entry name" value="Aldolase"/>
    <property type="match status" value="1"/>
</dbReference>
<reference key="1">
    <citation type="submission" date="2008-03" db="EMBL/GenBank/DDBJ databases">
        <title>Complete sequence of Thermoproteus neutrophilus V24Sta.</title>
        <authorList>
            <consortium name="US DOE Joint Genome Institute"/>
            <person name="Copeland A."/>
            <person name="Lucas S."/>
            <person name="Lapidus A."/>
            <person name="Glavina del Rio T."/>
            <person name="Dalin E."/>
            <person name="Tice H."/>
            <person name="Bruce D."/>
            <person name="Goodwin L."/>
            <person name="Pitluck S."/>
            <person name="Sims D."/>
            <person name="Brettin T."/>
            <person name="Detter J.C."/>
            <person name="Han C."/>
            <person name="Kuske C.R."/>
            <person name="Schmutz J."/>
            <person name="Larimer F."/>
            <person name="Land M."/>
            <person name="Hauser L."/>
            <person name="Kyrpides N."/>
            <person name="Mikhailova N."/>
            <person name="Biddle J.F."/>
            <person name="Zhang Z."/>
            <person name="Fitz-Gibbon S.T."/>
            <person name="Lowe T.M."/>
            <person name="Saltikov C."/>
            <person name="House C.H."/>
            <person name="Richardson P."/>
        </authorList>
    </citation>
    <scope>NUCLEOTIDE SEQUENCE [LARGE SCALE GENOMIC DNA]</scope>
    <source>
        <strain>DSM 2338 / JCM 9278 / NBRC 100436 / V24Sta</strain>
    </source>
</reference>
<sequence length="301" mass="33177">MRIEGVVVATVTPFAKDGVNYEGLRALLSKIVEEGYQGVFPTSSTGEVTKLTFEERVKAMEVAKEVAGGRALVVAGTGTGDHLSTIEIARRYRDVGVDVLLITPPYYIQYDWAAVYAFYKRVLDKVDMPVVLYTIPLATGYNIPVEVFELVANEYSQVVGVKDSSGDFRYHLDLIHLLGKRLSVLQGLDLLFVPSLLMGAHGGVLAGPNFLGRITLEQYRLVKEGKTAEAVALHNKLMPLWRFMGGCGLVGKLGGKWPTLYKVATQMVRGIDMGPPREPLPPIDDRDRKELEKLLKDLGLI</sequence>
<feature type="chain" id="PRO_1000124073" description="Uncharacterized DapA-like lyase Tneu_1812">
    <location>
        <begin position="1"/>
        <end position="301"/>
    </location>
</feature>
<feature type="active site" description="Charge relay system" evidence="1">
    <location>
        <position position="44"/>
    </location>
</feature>
<feature type="active site" description="Charge relay system" evidence="1">
    <location>
        <position position="107"/>
    </location>
</feature>
<feature type="active site" description="Proton donor" evidence="1">
    <location>
        <position position="133"/>
    </location>
</feature>
<feature type="active site" description="Schiff-base intermediate with substrate" evidence="1">
    <location>
        <position position="162"/>
    </location>
</feature>
<accession>B1YB29</accession>
<comment type="subunit">
    <text evidence="1">Homotetramer.</text>
</comment>
<comment type="subcellular location">
    <subcellularLocation>
        <location evidence="2">Cytoplasm</location>
    </subcellularLocation>
</comment>
<comment type="similarity">
    <text evidence="2">Belongs to the DapA family.</text>
</comment>
<keyword id="KW-0963">Cytoplasm</keyword>
<keyword id="KW-0456">Lyase</keyword>
<keyword id="KW-0704">Schiff base</keyword>